<proteinExistence type="inferred from homology"/>
<protein>
    <recommendedName>
        <fullName evidence="1">Holo-[acyl-carrier-protein] synthase</fullName>
        <shortName evidence="1">Holo-ACP synthase</shortName>
        <ecNumber evidence="1">2.7.8.7</ecNumber>
    </recommendedName>
    <alternativeName>
        <fullName evidence="1">4'-phosphopantetheinyl transferase AcpS</fullName>
    </alternativeName>
</protein>
<keyword id="KW-0963">Cytoplasm</keyword>
<keyword id="KW-0275">Fatty acid biosynthesis</keyword>
<keyword id="KW-0276">Fatty acid metabolism</keyword>
<keyword id="KW-0444">Lipid biosynthesis</keyword>
<keyword id="KW-0443">Lipid metabolism</keyword>
<keyword id="KW-0460">Magnesium</keyword>
<keyword id="KW-0479">Metal-binding</keyword>
<keyword id="KW-0808">Transferase</keyword>
<reference key="1">
    <citation type="journal article" date="2006" name="Proc. Natl. Acad. Sci. U.S.A.">
        <title>Comparative genomics of the lactic acid bacteria.</title>
        <authorList>
            <person name="Makarova K.S."/>
            <person name="Slesarev A."/>
            <person name="Wolf Y.I."/>
            <person name="Sorokin A."/>
            <person name="Mirkin B."/>
            <person name="Koonin E.V."/>
            <person name="Pavlov A."/>
            <person name="Pavlova N."/>
            <person name="Karamychev V."/>
            <person name="Polouchine N."/>
            <person name="Shakhova V."/>
            <person name="Grigoriev I."/>
            <person name="Lou Y."/>
            <person name="Rohksar D."/>
            <person name="Lucas S."/>
            <person name="Huang K."/>
            <person name="Goodstein D.M."/>
            <person name="Hawkins T."/>
            <person name="Plengvidhya V."/>
            <person name="Welker D."/>
            <person name="Hughes J."/>
            <person name="Goh Y."/>
            <person name="Benson A."/>
            <person name="Baldwin K."/>
            <person name="Lee J.-H."/>
            <person name="Diaz-Muniz I."/>
            <person name="Dosti B."/>
            <person name="Smeianov V."/>
            <person name="Wechter W."/>
            <person name="Barabote R."/>
            <person name="Lorca G."/>
            <person name="Altermann E."/>
            <person name="Barrangou R."/>
            <person name="Ganesan B."/>
            <person name="Xie Y."/>
            <person name="Rawsthorne H."/>
            <person name="Tamir D."/>
            <person name="Parker C."/>
            <person name="Breidt F."/>
            <person name="Broadbent J.R."/>
            <person name="Hutkins R."/>
            <person name="O'Sullivan D."/>
            <person name="Steele J."/>
            <person name="Unlu G."/>
            <person name="Saier M.H. Jr."/>
            <person name="Klaenhammer T."/>
            <person name="Richardson P."/>
            <person name="Kozyavkin S."/>
            <person name="Weimer B.C."/>
            <person name="Mills D.A."/>
        </authorList>
    </citation>
    <scope>NUCLEOTIDE SEQUENCE [LARGE SCALE GENOMIC DNA]</scope>
    <source>
        <strain>SK11</strain>
    </source>
</reference>
<gene>
    <name evidence="1" type="primary">acpS</name>
    <name type="ordered locus">LACR_0909</name>
</gene>
<accession>Q030B5</accession>
<comment type="function">
    <text evidence="1">Transfers the 4'-phosphopantetheine moiety from coenzyme A to a Ser of acyl-carrier-protein.</text>
</comment>
<comment type="catalytic activity">
    <reaction evidence="1">
        <text>apo-[ACP] + CoA = holo-[ACP] + adenosine 3',5'-bisphosphate + H(+)</text>
        <dbReference type="Rhea" id="RHEA:12068"/>
        <dbReference type="Rhea" id="RHEA-COMP:9685"/>
        <dbReference type="Rhea" id="RHEA-COMP:9690"/>
        <dbReference type="ChEBI" id="CHEBI:15378"/>
        <dbReference type="ChEBI" id="CHEBI:29999"/>
        <dbReference type="ChEBI" id="CHEBI:57287"/>
        <dbReference type="ChEBI" id="CHEBI:58343"/>
        <dbReference type="ChEBI" id="CHEBI:64479"/>
        <dbReference type="EC" id="2.7.8.7"/>
    </reaction>
</comment>
<comment type="cofactor">
    <cofactor evidence="1">
        <name>Mg(2+)</name>
        <dbReference type="ChEBI" id="CHEBI:18420"/>
    </cofactor>
</comment>
<comment type="subcellular location">
    <subcellularLocation>
        <location evidence="1">Cytoplasm</location>
    </subcellularLocation>
</comment>
<comment type="similarity">
    <text evidence="1">Belongs to the P-Pant transferase superfamily. AcpS family.</text>
</comment>
<organism>
    <name type="scientific">Lactococcus lactis subsp. cremoris (strain SK11)</name>
    <dbReference type="NCBI Taxonomy" id="272622"/>
    <lineage>
        <taxon>Bacteria</taxon>
        <taxon>Bacillati</taxon>
        <taxon>Bacillota</taxon>
        <taxon>Bacilli</taxon>
        <taxon>Lactobacillales</taxon>
        <taxon>Streptococcaceae</taxon>
        <taxon>Lactococcus</taxon>
        <taxon>Lactococcus cremoris subsp. cremoris</taxon>
    </lineage>
</organism>
<name>ACPS_LACLS</name>
<dbReference type="EC" id="2.7.8.7" evidence="1"/>
<dbReference type="EMBL" id="CP000425">
    <property type="protein sequence ID" value="ABJ72457.1"/>
    <property type="molecule type" value="Genomic_DNA"/>
</dbReference>
<dbReference type="RefSeq" id="WP_011675803.1">
    <property type="nucleotide sequence ID" value="NC_008527.1"/>
</dbReference>
<dbReference type="SMR" id="Q030B5"/>
<dbReference type="KEGG" id="llc:LACR_0909"/>
<dbReference type="HOGENOM" id="CLU_089696_1_2_9"/>
<dbReference type="Proteomes" id="UP000000240">
    <property type="component" value="Chromosome"/>
</dbReference>
<dbReference type="GO" id="GO:0005737">
    <property type="term" value="C:cytoplasm"/>
    <property type="evidence" value="ECO:0007669"/>
    <property type="project" value="UniProtKB-SubCell"/>
</dbReference>
<dbReference type="GO" id="GO:0008897">
    <property type="term" value="F:holo-[acyl-carrier-protein] synthase activity"/>
    <property type="evidence" value="ECO:0007669"/>
    <property type="project" value="UniProtKB-UniRule"/>
</dbReference>
<dbReference type="GO" id="GO:0000287">
    <property type="term" value="F:magnesium ion binding"/>
    <property type="evidence" value="ECO:0007669"/>
    <property type="project" value="UniProtKB-UniRule"/>
</dbReference>
<dbReference type="GO" id="GO:0006633">
    <property type="term" value="P:fatty acid biosynthetic process"/>
    <property type="evidence" value="ECO:0007669"/>
    <property type="project" value="UniProtKB-UniRule"/>
</dbReference>
<dbReference type="Gene3D" id="3.90.470.20">
    <property type="entry name" value="4'-phosphopantetheinyl transferase domain"/>
    <property type="match status" value="1"/>
</dbReference>
<dbReference type="HAMAP" id="MF_00101">
    <property type="entry name" value="AcpS"/>
    <property type="match status" value="1"/>
</dbReference>
<dbReference type="InterPro" id="IPR008278">
    <property type="entry name" value="4-PPantetheinyl_Trfase_dom"/>
</dbReference>
<dbReference type="InterPro" id="IPR037143">
    <property type="entry name" value="4-PPantetheinyl_Trfase_dom_sf"/>
</dbReference>
<dbReference type="InterPro" id="IPR002582">
    <property type="entry name" value="ACPS"/>
</dbReference>
<dbReference type="InterPro" id="IPR004568">
    <property type="entry name" value="Ppantetheine-prot_Trfase_dom"/>
</dbReference>
<dbReference type="NCBIfam" id="TIGR00516">
    <property type="entry name" value="acpS"/>
    <property type="match status" value="1"/>
</dbReference>
<dbReference type="NCBIfam" id="TIGR00556">
    <property type="entry name" value="pantethn_trn"/>
    <property type="match status" value="1"/>
</dbReference>
<dbReference type="Pfam" id="PF01648">
    <property type="entry name" value="ACPS"/>
    <property type="match status" value="1"/>
</dbReference>
<dbReference type="SUPFAM" id="SSF56214">
    <property type="entry name" value="4'-phosphopantetheinyl transferase"/>
    <property type="match status" value="1"/>
</dbReference>
<sequence length="119" mass="13414">MVFGTGVDNVELSRIQKALTRSERFVEQVLTTMELEKYNNFQSTARKTEFLAGRWAAKEAFSKAYGTGFGKALGMHDLEIKNDELGKPYFSKHPFEGQVHLSISHSNLEAVAFVVLEKN</sequence>
<evidence type="ECO:0000255" key="1">
    <source>
        <dbReference type="HAMAP-Rule" id="MF_00101"/>
    </source>
</evidence>
<feature type="chain" id="PRO_1000008441" description="Holo-[acyl-carrier-protein] synthase">
    <location>
        <begin position="1"/>
        <end position="119"/>
    </location>
</feature>
<feature type="binding site" evidence="1">
    <location>
        <position position="8"/>
    </location>
    <ligand>
        <name>Mg(2+)</name>
        <dbReference type="ChEBI" id="CHEBI:18420"/>
    </ligand>
</feature>
<feature type="binding site" evidence="1">
    <location>
        <position position="59"/>
    </location>
    <ligand>
        <name>Mg(2+)</name>
        <dbReference type="ChEBI" id="CHEBI:18420"/>
    </ligand>
</feature>